<sequence length="229" mass="25675">MEWTETQFDRQRREMVDSLRRNGIQNPWVLEAFQEVRRHLFVPEEGRAHAYDDAAWPIGYGQTISQPFTVAYMTSLLADHVPGGSGRPFGRVLEIGTGSGYQAAILEAIGYSVFSVERLPVLYHQAKAKFHRFGLPITCRLGDGTLGWPEEAPFDGILVSAGAPSEPKALKEQLAENGSMVIPVGNRGMQVMTLVTRKGARFEREQYQNFAFVPLVGREGWDDKNTLLY</sequence>
<accession>A4SGH4</accession>
<organism>
    <name type="scientific">Chlorobium phaeovibrioides (strain DSM 265 / 1930)</name>
    <name type="common">Prosthecochloris vibrioformis (strain DSM 265)</name>
    <dbReference type="NCBI Taxonomy" id="290318"/>
    <lineage>
        <taxon>Bacteria</taxon>
        <taxon>Pseudomonadati</taxon>
        <taxon>Chlorobiota</taxon>
        <taxon>Chlorobiia</taxon>
        <taxon>Chlorobiales</taxon>
        <taxon>Chlorobiaceae</taxon>
        <taxon>Chlorobium/Pelodictyon group</taxon>
        <taxon>Chlorobium</taxon>
    </lineage>
</organism>
<keyword id="KW-0963">Cytoplasm</keyword>
<keyword id="KW-0489">Methyltransferase</keyword>
<keyword id="KW-0949">S-adenosyl-L-methionine</keyword>
<keyword id="KW-0808">Transferase</keyword>
<dbReference type="EC" id="2.1.1.77" evidence="1"/>
<dbReference type="EMBL" id="CP000607">
    <property type="protein sequence ID" value="ABP37583.1"/>
    <property type="molecule type" value="Genomic_DNA"/>
</dbReference>
<dbReference type="SMR" id="A4SGH4"/>
<dbReference type="STRING" id="290318.Cvib_1573"/>
<dbReference type="KEGG" id="pvi:Cvib_1573"/>
<dbReference type="eggNOG" id="COG2518">
    <property type="taxonomic scope" value="Bacteria"/>
</dbReference>
<dbReference type="HOGENOM" id="CLU_055432_2_0_10"/>
<dbReference type="OrthoDB" id="9810066at2"/>
<dbReference type="GO" id="GO:0005737">
    <property type="term" value="C:cytoplasm"/>
    <property type="evidence" value="ECO:0007669"/>
    <property type="project" value="UniProtKB-SubCell"/>
</dbReference>
<dbReference type="GO" id="GO:0004719">
    <property type="term" value="F:protein-L-isoaspartate (D-aspartate) O-methyltransferase activity"/>
    <property type="evidence" value="ECO:0007669"/>
    <property type="project" value="UniProtKB-UniRule"/>
</dbReference>
<dbReference type="GO" id="GO:0032259">
    <property type="term" value="P:methylation"/>
    <property type="evidence" value="ECO:0007669"/>
    <property type="project" value="UniProtKB-KW"/>
</dbReference>
<dbReference type="GO" id="GO:0036211">
    <property type="term" value="P:protein modification process"/>
    <property type="evidence" value="ECO:0007669"/>
    <property type="project" value="UniProtKB-UniRule"/>
</dbReference>
<dbReference type="GO" id="GO:0030091">
    <property type="term" value="P:protein repair"/>
    <property type="evidence" value="ECO:0007669"/>
    <property type="project" value="UniProtKB-UniRule"/>
</dbReference>
<dbReference type="CDD" id="cd02440">
    <property type="entry name" value="AdoMet_MTases"/>
    <property type="match status" value="1"/>
</dbReference>
<dbReference type="FunFam" id="3.40.50.150:FF:000010">
    <property type="entry name" value="Protein-L-isoaspartate O-methyltransferase"/>
    <property type="match status" value="1"/>
</dbReference>
<dbReference type="Gene3D" id="3.40.50.150">
    <property type="entry name" value="Vaccinia Virus protein VP39"/>
    <property type="match status" value="1"/>
</dbReference>
<dbReference type="HAMAP" id="MF_00090">
    <property type="entry name" value="PIMT"/>
    <property type="match status" value="1"/>
</dbReference>
<dbReference type="InterPro" id="IPR000682">
    <property type="entry name" value="PCMT"/>
</dbReference>
<dbReference type="InterPro" id="IPR029063">
    <property type="entry name" value="SAM-dependent_MTases_sf"/>
</dbReference>
<dbReference type="NCBIfam" id="TIGR00080">
    <property type="entry name" value="pimt"/>
    <property type="match status" value="1"/>
</dbReference>
<dbReference type="NCBIfam" id="NF001453">
    <property type="entry name" value="PRK00312.1"/>
    <property type="match status" value="1"/>
</dbReference>
<dbReference type="PANTHER" id="PTHR11579">
    <property type="entry name" value="PROTEIN-L-ISOASPARTATE O-METHYLTRANSFERASE"/>
    <property type="match status" value="1"/>
</dbReference>
<dbReference type="PANTHER" id="PTHR11579:SF0">
    <property type="entry name" value="PROTEIN-L-ISOASPARTATE(D-ASPARTATE) O-METHYLTRANSFERASE"/>
    <property type="match status" value="1"/>
</dbReference>
<dbReference type="Pfam" id="PF01135">
    <property type="entry name" value="PCMT"/>
    <property type="match status" value="1"/>
</dbReference>
<dbReference type="SUPFAM" id="SSF53335">
    <property type="entry name" value="S-adenosyl-L-methionine-dependent methyltransferases"/>
    <property type="match status" value="1"/>
</dbReference>
<dbReference type="PROSITE" id="PS01279">
    <property type="entry name" value="PCMT"/>
    <property type="match status" value="1"/>
</dbReference>
<feature type="chain" id="PRO_0000351903" description="Protein-L-isoaspartate O-methyltransferase">
    <location>
        <begin position="1"/>
        <end position="229"/>
    </location>
</feature>
<feature type="active site" evidence="1">
    <location>
        <position position="65"/>
    </location>
</feature>
<reference key="1">
    <citation type="submission" date="2007-03" db="EMBL/GenBank/DDBJ databases">
        <title>Complete sequence of Prosthecochloris vibrioformis DSM 265.</title>
        <authorList>
            <consortium name="US DOE Joint Genome Institute"/>
            <person name="Copeland A."/>
            <person name="Lucas S."/>
            <person name="Lapidus A."/>
            <person name="Barry K."/>
            <person name="Detter J.C."/>
            <person name="Glavina del Rio T."/>
            <person name="Hammon N."/>
            <person name="Israni S."/>
            <person name="Pitluck S."/>
            <person name="Schmutz J."/>
            <person name="Larimer F."/>
            <person name="Land M."/>
            <person name="Hauser L."/>
            <person name="Mikhailova N."/>
            <person name="Li T."/>
            <person name="Overmann J."/>
            <person name="Schuster S.C."/>
            <person name="Bryant D.A."/>
            <person name="Richardson P."/>
        </authorList>
    </citation>
    <scope>NUCLEOTIDE SEQUENCE [LARGE SCALE GENOMIC DNA]</scope>
    <source>
        <strain>DSM 265 / 1930</strain>
    </source>
</reference>
<proteinExistence type="inferred from homology"/>
<comment type="function">
    <text evidence="1">Catalyzes the methyl esterification of L-isoaspartyl residues in peptides and proteins that result from spontaneous decomposition of normal L-aspartyl and L-asparaginyl residues. It plays a role in the repair and/or degradation of damaged proteins.</text>
</comment>
<comment type="catalytic activity">
    <reaction evidence="1">
        <text>[protein]-L-isoaspartate + S-adenosyl-L-methionine = [protein]-L-isoaspartate alpha-methyl ester + S-adenosyl-L-homocysteine</text>
        <dbReference type="Rhea" id="RHEA:12705"/>
        <dbReference type="Rhea" id="RHEA-COMP:12143"/>
        <dbReference type="Rhea" id="RHEA-COMP:12144"/>
        <dbReference type="ChEBI" id="CHEBI:57856"/>
        <dbReference type="ChEBI" id="CHEBI:59789"/>
        <dbReference type="ChEBI" id="CHEBI:90596"/>
        <dbReference type="ChEBI" id="CHEBI:90598"/>
        <dbReference type="EC" id="2.1.1.77"/>
    </reaction>
</comment>
<comment type="subcellular location">
    <subcellularLocation>
        <location evidence="1">Cytoplasm</location>
    </subcellularLocation>
</comment>
<comment type="similarity">
    <text evidence="1">Belongs to the methyltransferase superfamily. L-isoaspartyl/D-aspartyl protein methyltransferase family.</text>
</comment>
<protein>
    <recommendedName>
        <fullName evidence="1">Protein-L-isoaspartate O-methyltransferase</fullName>
        <ecNumber evidence="1">2.1.1.77</ecNumber>
    </recommendedName>
    <alternativeName>
        <fullName evidence="1">L-isoaspartyl protein carboxyl methyltransferase</fullName>
    </alternativeName>
    <alternativeName>
        <fullName evidence="1">Protein L-isoaspartyl methyltransferase</fullName>
    </alternativeName>
    <alternativeName>
        <fullName evidence="1">Protein-beta-aspartate methyltransferase</fullName>
        <shortName evidence="1">PIMT</shortName>
    </alternativeName>
</protein>
<evidence type="ECO:0000255" key="1">
    <source>
        <dbReference type="HAMAP-Rule" id="MF_00090"/>
    </source>
</evidence>
<gene>
    <name evidence="1" type="primary">pcm</name>
    <name type="ordered locus">Cvib_1573</name>
</gene>
<name>PIMT_CHLPM</name>